<proteinExistence type="inferred from homology"/>
<name>CLPX_BRUA2</name>
<feature type="chain" id="PRO_1000024523" description="ATP-dependent Clp protease ATP-binding subunit ClpX">
    <location>
        <begin position="1"/>
        <end position="424"/>
    </location>
</feature>
<feature type="domain" description="ClpX-type ZB" evidence="2">
    <location>
        <begin position="5"/>
        <end position="58"/>
    </location>
</feature>
<feature type="binding site" evidence="2">
    <location>
        <position position="17"/>
    </location>
    <ligand>
        <name>Zn(2+)</name>
        <dbReference type="ChEBI" id="CHEBI:29105"/>
    </ligand>
</feature>
<feature type="binding site" evidence="2">
    <location>
        <position position="20"/>
    </location>
    <ligand>
        <name>Zn(2+)</name>
        <dbReference type="ChEBI" id="CHEBI:29105"/>
    </ligand>
</feature>
<feature type="binding site" evidence="2">
    <location>
        <position position="39"/>
    </location>
    <ligand>
        <name>Zn(2+)</name>
        <dbReference type="ChEBI" id="CHEBI:29105"/>
    </ligand>
</feature>
<feature type="binding site" evidence="2">
    <location>
        <position position="42"/>
    </location>
    <ligand>
        <name>Zn(2+)</name>
        <dbReference type="ChEBI" id="CHEBI:29105"/>
    </ligand>
</feature>
<feature type="binding site" evidence="1">
    <location>
        <begin position="121"/>
        <end position="128"/>
    </location>
    <ligand>
        <name>ATP</name>
        <dbReference type="ChEBI" id="CHEBI:30616"/>
    </ligand>
</feature>
<gene>
    <name evidence="1" type="primary">clpX</name>
    <name type="ordered locus">BAB1_1131</name>
</gene>
<dbReference type="EMBL" id="AM040264">
    <property type="protein sequence ID" value="CAJ11087.1"/>
    <property type="molecule type" value="Genomic_DNA"/>
</dbReference>
<dbReference type="RefSeq" id="WP_002964236.1">
    <property type="nucleotide sequence ID" value="NZ_KN046823.1"/>
</dbReference>
<dbReference type="SMR" id="Q2YPX2"/>
<dbReference type="STRING" id="359391.BAB1_1131"/>
<dbReference type="GeneID" id="93016553"/>
<dbReference type="KEGG" id="bmf:BAB1_1131"/>
<dbReference type="PATRIC" id="fig|359391.11.peg.31"/>
<dbReference type="HOGENOM" id="CLU_014218_8_2_5"/>
<dbReference type="PhylomeDB" id="Q2YPX2"/>
<dbReference type="Proteomes" id="UP000002719">
    <property type="component" value="Chromosome I"/>
</dbReference>
<dbReference type="GO" id="GO:0009376">
    <property type="term" value="C:HslUV protease complex"/>
    <property type="evidence" value="ECO:0007669"/>
    <property type="project" value="TreeGrafter"/>
</dbReference>
<dbReference type="GO" id="GO:0005524">
    <property type="term" value="F:ATP binding"/>
    <property type="evidence" value="ECO:0007669"/>
    <property type="project" value="UniProtKB-UniRule"/>
</dbReference>
<dbReference type="GO" id="GO:0016887">
    <property type="term" value="F:ATP hydrolysis activity"/>
    <property type="evidence" value="ECO:0007669"/>
    <property type="project" value="InterPro"/>
</dbReference>
<dbReference type="GO" id="GO:0140662">
    <property type="term" value="F:ATP-dependent protein folding chaperone"/>
    <property type="evidence" value="ECO:0007669"/>
    <property type="project" value="InterPro"/>
</dbReference>
<dbReference type="GO" id="GO:0046983">
    <property type="term" value="F:protein dimerization activity"/>
    <property type="evidence" value="ECO:0007669"/>
    <property type="project" value="InterPro"/>
</dbReference>
<dbReference type="GO" id="GO:0051082">
    <property type="term" value="F:unfolded protein binding"/>
    <property type="evidence" value="ECO:0007669"/>
    <property type="project" value="UniProtKB-UniRule"/>
</dbReference>
<dbReference type="GO" id="GO:0008270">
    <property type="term" value="F:zinc ion binding"/>
    <property type="evidence" value="ECO:0007669"/>
    <property type="project" value="InterPro"/>
</dbReference>
<dbReference type="GO" id="GO:0051301">
    <property type="term" value="P:cell division"/>
    <property type="evidence" value="ECO:0007669"/>
    <property type="project" value="TreeGrafter"/>
</dbReference>
<dbReference type="GO" id="GO:0051603">
    <property type="term" value="P:proteolysis involved in protein catabolic process"/>
    <property type="evidence" value="ECO:0007669"/>
    <property type="project" value="TreeGrafter"/>
</dbReference>
<dbReference type="CDD" id="cd19497">
    <property type="entry name" value="RecA-like_ClpX"/>
    <property type="match status" value="1"/>
</dbReference>
<dbReference type="FunFam" id="1.10.8.60:FF:000002">
    <property type="entry name" value="ATP-dependent Clp protease ATP-binding subunit ClpX"/>
    <property type="match status" value="1"/>
</dbReference>
<dbReference type="FunFam" id="3.40.50.300:FF:000005">
    <property type="entry name" value="ATP-dependent Clp protease ATP-binding subunit ClpX"/>
    <property type="match status" value="1"/>
</dbReference>
<dbReference type="Gene3D" id="1.10.8.60">
    <property type="match status" value="1"/>
</dbReference>
<dbReference type="Gene3D" id="6.20.220.10">
    <property type="entry name" value="ClpX chaperone, C4-type zinc finger domain"/>
    <property type="match status" value="1"/>
</dbReference>
<dbReference type="Gene3D" id="3.40.50.300">
    <property type="entry name" value="P-loop containing nucleotide triphosphate hydrolases"/>
    <property type="match status" value="1"/>
</dbReference>
<dbReference type="HAMAP" id="MF_00175">
    <property type="entry name" value="ClpX"/>
    <property type="match status" value="1"/>
</dbReference>
<dbReference type="InterPro" id="IPR003593">
    <property type="entry name" value="AAA+_ATPase"/>
</dbReference>
<dbReference type="InterPro" id="IPR050052">
    <property type="entry name" value="ATP-dep_Clp_protease_ClpX"/>
</dbReference>
<dbReference type="InterPro" id="IPR003959">
    <property type="entry name" value="ATPase_AAA_core"/>
</dbReference>
<dbReference type="InterPro" id="IPR019489">
    <property type="entry name" value="Clp_ATPase_C"/>
</dbReference>
<dbReference type="InterPro" id="IPR004487">
    <property type="entry name" value="Clp_protease_ATP-bd_su_ClpX"/>
</dbReference>
<dbReference type="InterPro" id="IPR046425">
    <property type="entry name" value="ClpX_bact"/>
</dbReference>
<dbReference type="InterPro" id="IPR027417">
    <property type="entry name" value="P-loop_NTPase"/>
</dbReference>
<dbReference type="InterPro" id="IPR010603">
    <property type="entry name" value="Znf_CppX_C4"/>
</dbReference>
<dbReference type="InterPro" id="IPR038366">
    <property type="entry name" value="Znf_CppX_C4_sf"/>
</dbReference>
<dbReference type="NCBIfam" id="TIGR00382">
    <property type="entry name" value="clpX"/>
    <property type="match status" value="1"/>
</dbReference>
<dbReference type="NCBIfam" id="NF003745">
    <property type="entry name" value="PRK05342.1"/>
    <property type="match status" value="1"/>
</dbReference>
<dbReference type="PANTHER" id="PTHR48102:SF7">
    <property type="entry name" value="ATP-DEPENDENT CLP PROTEASE ATP-BINDING SUBUNIT CLPX-LIKE, MITOCHONDRIAL"/>
    <property type="match status" value="1"/>
</dbReference>
<dbReference type="PANTHER" id="PTHR48102">
    <property type="entry name" value="ATP-DEPENDENT CLP PROTEASE ATP-BINDING SUBUNIT CLPX-LIKE, MITOCHONDRIAL-RELATED"/>
    <property type="match status" value="1"/>
</dbReference>
<dbReference type="Pfam" id="PF07724">
    <property type="entry name" value="AAA_2"/>
    <property type="match status" value="1"/>
</dbReference>
<dbReference type="Pfam" id="PF10431">
    <property type="entry name" value="ClpB_D2-small"/>
    <property type="match status" value="1"/>
</dbReference>
<dbReference type="Pfam" id="PF06689">
    <property type="entry name" value="zf-C4_ClpX"/>
    <property type="match status" value="1"/>
</dbReference>
<dbReference type="SMART" id="SM00382">
    <property type="entry name" value="AAA"/>
    <property type="match status" value="1"/>
</dbReference>
<dbReference type="SMART" id="SM01086">
    <property type="entry name" value="ClpB_D2-small"/>
    <property type="match status" value="1"/>
</dbReference>
<dbReference type="SMART" id="SM00994">
    <property type="entry name" value="zf-C4_ClpX"/>
    <property type="match status" value="1"/>
</dbReference>
<dbReference type="SUPFAM" id="SSF57716">
    <property type="entry name" value="Glucocorticoid receptor-like (DNA-binding domain)"/>
    <property type="match status" value="1"/>
</dbReference>
<dbReference type="SUPFAM" id="SSF52540">
    <property type="entry name" value="P-loop containing nucleoside triphosphate hydrolases"/>
    <property type="match status" value="1"/>
</dbReference>
<dbReference type="PROSITE" id="PS51902">
    <property type="entry name" value="CLPX_ZB"/>
    <property type="match status" value="1"/>
</dbReference>
<comment type="function">
    <text evidence="1">ATP-dependent specificity component of the Clp protease. It directs the protease to specific substrates. Can perform chaperone functions in the absence of ClpP.</text>
</comment>
<comment type="subunit">
    <text evidence="1">Component of the ClpX-ClpP complex. Forms a hexameric ring that, in the presence of ATP, binds to fourteen ClpP subunits assembled into a disk-like structure with a central cavity, resembling the structure of eukaryotic proteasomes.</text>
</comment>
<comment type="similarity">
    <text evidence="1">Belongs to the ClpX chaperone family.</text>
</comment>
<protein>
    <recommendedName>
        <fullName evidence="1">ATP-dependent Clp protease ATP-binding subunit ClpX</fullName>
    </recommendedName>
</protein>
<accession>Q2YPX2</accession>
<keyword id="KW-0067">ATP-binding</keyword>
<keyword id="KW-0143">Chaperone</keyword>
<keyword id="KW-0479">Metal-binding</keyword>
<keyword id="KW-0547">Nucleotide-binding</keyword>
<keyword id="KW-1185">Reference proteome</keyword>
<keyword id="KW-0862">Zinc</keyword>
<reference key="1">
    <citation type="journal article" date="2005" name="Infect. Immun.">
        <title>Whole-genome analyses of speciation events in pathogenic Brucellae.</title>
        <authorList>
            <person name="Chain P.S."/>
            <person name="Comerci D.J."/>
            <person name="Tolmasky M.E."/>
            <person name="Larimer F.W."/>
            <person name="Malfatti S.A."/>
            <person name="Vergez L.M."/>
            <person name="Aguero F."/>
            <person name="Land M.L."/>
            <person name="Ugalde R.A."/>
            <person name="Garcia E."/>
        </authorList>
    </citation>
    <scope>NUCLEOTIDE SEQUENCE [LARGE SCALE GENOMIC DNA]</scope>
    <source>
        <strain>2308</strain>
    </source>
</reference>
<evidence type="ECO:0000255" key="1">
    <source>
        <dbReference type="HAMAP-Rule" id="MF_00175"/>
    </source>
</evidence>
<evidence type="ECO:0000255" key="2">
    <source>
        <dbReference type="PROSITE-ProRule" id="PRU01250"/>
    </source>
</evidence>
<organism>
    <name type="scientific">Brucella abortus (strain 2308)</name>
    <dbReference type="NCBI Taxonomy" id="359391"/>
    <lineage>
        <taxon>Bacteria</taxon>
        <taxon>Pseudomonadati</taxon>
        <taxon>Pseudomonadota</taxon>
        <taxon>Alphaproteobacteria</taxon>
        <taxon>Hyphomicrobiales</taxon>
        <taxon>Brucellaceae</taxon>
        <taxon>Brucella/Ochrobactrum group</taxon>
        <taxon>Brucella</taxon>
    </lineage>
</organism>
<sequence length="424" mass="46656">MSKVSNGGGDSKNTLYCSFCGKSQHEVRKLIAGPTVFICDECVELCMDIIREENKSSMVKSREGVPTPQEIMAVLDDYVIGQKDAKRVLSVAVHNHYKRLAHQSKNSDIELAKSNILLVGPTGCGKTYLAQTLARIIDVPFIMADATTLTEAGYVGEDVENIILKLLQAADYNVERAQRGIVYIDEVDKISRKSDNPSITRDVSGEGVQQALLKIMEGTVASVPPQGGRKHPQQEFLQVDTTNILFICGGAFAGLDRIISARGEKTSIGFGATVKSVDERRIGEVFKELEPEDLLKFGLIPEFVGRLPVIATLEDLDVDALVQILTEPKNALVKQYQRLFDMENVELVFHDDALRAIANKAVERKTGARGLRSIMEKILLDTMFELPTLEGVREVVISGDVVDGSARPLYIYAERQDEKGNVSA</sequence>